<evidence type="ECO:0000255" key="1">
    <source>
        <dbReference type="HAMAP-Rule" id="MF_00116"/>
    </source>
</evidence>
<keyword id="KW-0378">Hydrolase</keyword>
<keyword id="KW-0460">Magnesium</keyword>
<keyword id="KW-0479">Metal-binding</keyword>
<keyword id="KW-0546">Nucleotide metabolism</keyword>
<protein>
    <recommendedName>
        <fullName evidence="1">Deoxyuridine 5'-triphosphate nucleotidohydrolase</fullName>
        <shortName evidence="1">dUTPase</shortName>
        <ecNumber evidence="1">3.6.1.23</ecNumber>
    </recommendedName>
    <alternativeName>
        <fullName evidence="1">dUTP pyrophosphatase</fullName>
    </alternativeName>
</protein>
<name>DUT_WOLWR</name>
<accession>C0R5L9</accession>
<feature type="chain" id="PRO_1000119248" description="Deoxyuridine 5'-triphosphate nucleotidohydrolase">
    <location>
        <begin position="1"/>
        <end position="153"/>
    </location>
</feature>
<feature type="binding site" evidence="1">
    <location>
        <begin position="71"/>
        <end position="73"/>
    </location>
    <ligand>
        <name>substrate</name>
    </ligand>
</feature>
<feature type="binding site" evidence="1">
    <location>
        <position position="84"/>
    </location>
    <ligand>
        <name>substrate</name>
    </ligand>
</feature>
<feature type="binding site" evidence="1">
    <location>
        <begin position="88"/>
        <end position="90"/>
    </location>
    <ligand>
        <name>substrate</name>
    </ligand>
</feature>
<feature type="binding site" evidence="1">
    <location>
        <position position="98"/>
    </location>
    <ligand>
        <name>substrate</name>
    </ligand>
</feature>
<proteinExistence type="inferred from homology"/>
<sequence length="153" mass="16623">MQRSKIKVEIKRLSHGEDLSLPCYATVQSAGMDLYAALNDSAVLNPLERLLVPTGIVIAIPNGFEGQVRPRSGLAAKHGITVLNSPGTIDSDYRGEVKICLINLSNQPYEIKRGDRIAQILISPVSQVIWDDREEFCAEETGRNAGGFGSSGR</sequence>
<organism>
    <name type="scientific">Wolbachia sp. subsp. Drosophila simulans (strain wRi)</name>
    <dbReference type="NCBI Taxonomy" id="66084"/>
    <lineage>
        <taxon>Bacteria</taxon>
        <taxon>Pseudomonadati</taxon>
        <taxon>Pseudomonadota</taxon>
        <taxon>Alphaproteobacteria</taxon>
        <taxon>Rickettsiales</taxon>
        <taxon>Anaplasmataceae</taxon>
        <taxon>Wolbachieae</taxon>
        <taxon>Wolbachia</taxon>
    </lineage>
</organism>
<gene>
    <name evidence="1" type="primary">dut</name>
    <name type="ordered locus">WRi_002310</name>
</gene>
<reference key="1">
    <citation type="journal article" date="2009" name="Proc. Natl. Acad. Sci. U.S.A.">
        <title>The mosaic genome structure of the Wolbachia wRi strain infecting Drosophila simulans.</title>
        <authorList>
            <person name="Klasson L."/>
            <person name="Westberg J."/>
            <person name="Sapountzis P."/>
            <person name="Naeslund K."/>
            <person name="Lutnaes Y."/>
            <person name="Darby A.C."/>
            <person name="Veneti Z."/>
            <person name="Chen L."/>
            <person name="Braig H.R."/>
            <person name="Garrett R."/>
            <person name="Bourtzis K."/>
            <person name="Andersson S.G."/>
        </authorList>
    </citation>
    <scope>NUCLEOTIDE SEQUENCE [LARGE SCALE GENOMIC DNA]</scope>
    <source>
        <strain>wRi</strain>
    </source>
</reference>
<dbReference type="EC" id="3.6.1.23" evidence="1"/>
<dbReference type="EMBL" id="CP001391">
    <property type="protein sequence ID" value="ACN95061.1"/>
    <property type="molecule type" value="Genomic_DNA"/>
</dbReference>
<dbReference type="RefSeq" id="WP_012673099.1">
    <property type="nucleotide sequence ID" value="NZ_MKIF01000143.1"/>
</dbReference>
<dbReference type="SMR" id="C0R5L9"/>
<dbReference type="STRING" id="66084.WRi_002310"/>
<dbReference type="KEGG" id="wri:WRi_002310"/>
<dbReference type="HOGENOM" id="CLU_068508_1_2_5"/>
<dbReference type="UniPathway" id="UPA00610">
    <property type="reaction ID" value="UER00666"/>
</dbReference>
<dbReference type="Proteomes" id="UP000001293">
    <property type="component" value="Chromosome"/>
</dbReference>
<dbReference type="GO" id="GO:0004170">
    <property type="term" value="F:dUTP diphosphatase activity"/>
    <property type="evidence" value="ECO:0007669"/>
    <property type="project" value="UniProtKB-UniRule"/>
</dbReference>
<dbReference type="GO" id="GO:0000287">
    <property type="term" value="F:magnesium ion binding"/>
    <property type="evidence" value="ECO:0007669"/>
    <property type="project" value="UniProtKB-UniRule"/>
</dbReference>
<dbReference type="GO" id="GO:0006226">
    <property type="term" value="P:dUMP biosynthetic process"/>
    <property type="evidence" value="ECO:0007669"/>
    <property type="project" value="UniProtKB-UniRule"/>
</dbReference>
<dbReference type="GO" id="GO:0046081">
    <property type="term" value="P:dUTP catabolic process"/>
    <property type="evidence" value="ECO:0007669"/>
    <property type="project" value="InterPro"/>
</dbReference>
<dbReference type="CDD" id="cd07557">
    <property type="entry name" value="trimeric_dUTPase"/>
    <property type="match status" value="1"/>
</dbReference>
<dbReference type="FunFam" id="2.70.40.10:FF:000002">
    <property type="entry name" value="dUTP diphosphatase"/>
    <property type="match status" value="1"/>
</dbReference>
<dbReference type="Gene3D" id="2.70.40.10">
    <property type="match status" value="1"/>
</dbReference>
<dbReference type="HAMAP" id="MF_00116">
    <property type="entry name" value="dUTPase_bact"/>
    <property type="match status" value="1"/>
</dbReference>
<dbReference type="InterPro" id="IPR008181">
    <property type="entry name" value="dUTPase"/>
</dbReference>
<dbReference type="InterPro" id="IPR029054">
    <property type="entry name" value="dUTPase-like"/>
</dbReference>
<dbReference type="InterPro" id="IPR036157">
    <property type="entry name" value="dUTPase-like_sf"/>
</dbReference>
<dbReference type="InterPro" id="IPR033704">
    <property type="entry name" value="dUTPase_trimeric"/>
</dbReference>
<dbReference type="NCBIfam" id="TIGR00576">
    <property type="entry name" value="dut"/>
    <property type="match status" value="1"/>
</dbReference>
<dbReference type="NCBIfam" id="NF001862">
    <property type="entry name" value="PRK00601.1"/>
    <property type="match status" value="1"/>
</dbReference>
<dbReference type="PANTHER" id="PTHR11241">
    <property type="entry name" value="DEOXYURIDINE 5'-TRIPHOSPHATE NUCLEOTIDOHYDROLASE"/>
    <property type="match status" value="1"/>
</dbReference>
<dbReference type="PANTHER" id="PTHR11241:SF0">
    <property type="entry name" value="DEOXYURIDINE 5'-TRIPHOSPHATE NUCLEOTIDOHYDROLASE"/>
    <property type="match status" value="1"/>
</dbReference>
<dbReference type="Pfam" id="PF00692">
    <property type="entry name" value="dUTPase"/>
    <property type="match status" value="1"/>
</dbReference>
<dbReference type="SUPFAM" id="SSF51283">
    <property type="entry name" value="dUTPase-like"/>
    <property type="match status" value="1"/>
</dbReference>
<comment type="function">
    <text evidence="1">This enzyme is involved in nucleotide metabolism: it produces dUMP, the immediate precursor of thymidine nucleotides and it decreases the intracellular concentration of dUTP so that uracil cannot be incorporated into DNA.</text>
</comment>
<comment type="catalytic activity">
    <reaction evidence="1">
        <text>dUTP + H2O = dUMP + diphosphate + H(+)</text>
        <dbReference type="Rhea" id="RHEA:10248"/>
        <dbReference type="ChEBI" id="CHEBI:15377"/>
        <dbReference type="ChEBI" id="CHEBI:15378"/>
        <dbReference type="ChEBI" id="CHEBI:33019"/>
        <dbReference type="ChEBI" id="CHEBI:61555"/>
        <dbReference type="ChEBI" id="CHEBI:246422"/>
        <dbReference type="EC" id="3.6.1.23"/>
    </reaction>
</comment>
<comment type="cofactor">
    <cofactor evidence="1">
        <name>Mg(2+)</name>
        <dbReference type="ChEBI" id="CHEBI:18420"/>
    </cofactor>
</comment>
<comment type="pathway">
    <text evidence="1">Pyrimidine metabolism; dUMP biosynthesis; dUMP from dCTP (dUTP route): step 2/2.</text>
</comment>
<comment type="similarity">
    <text evidence="1">Belongs to the dUTPase family.</text>
</comment>